<protein>
    <recommendedName>
        <fullName>Plipastatin synthase subunit A</fullName>
        <ecNumber>2.3.1.-</ecNumber>
    </recommendedName>
    <alternativeName>
        <fullName>Peptide synthase 1</fullName>
    </alternativeName>
    <domain>
        <recommendedName>
            <fullName>ATP-dependent glutamate adenylase 1</fullName>
            <shortName>GluA 1</shortName>
        </recommendedName>
        <alternativeName>
            <fullName>Glutamate activase 1</fullName>
        </alternativeName>
    </domain>
    <domain>
        <recommendedName>
            <fullName>ATP-dependent ornithine adenylase</fullName>
            <shortName>OrnA</shortName>
        </recommendedName>
        <alternativeName>
            <fullName>Ornithine activase</fullName>
        </alternativeName>
    </domain>
</protein>
<name>PPSA_BACSU</name>
<keyword id="KW-0045">Antibiotic biosynthesis</keyword>
<keyword id="KW-0436">Ligase</keyword>
<keyword id="KW-0511">Multifunctional enzyme</keyword>
<keyword id="KW-0596">Phosphopantetheine</keyword>
<keyword id="KW-0597">Phosphoprotein</keyword>
<keyword id="KW-1185">Reference proteome</keyword>
<keyword id="KW-0677">Repeat</keyword>
<keyword id="KW-0808">Transferase</keyword>
<organism>
    <name type="scientific">Bacillus subtilis (strain 168)</name>
    <dbReference type="NCBI Taxonomy" id="224308"/>
    <lineage>
        <taxon>Bacteria</taxon>
        <taxon>Bacillati</taxon>
        <taxon>Bacillota</taxon>
        <taxon>Bacilli</taxon>
        <taxon>Bacillales</taxon>
        <taxon>Bacillaceae</taxon>
        <taxon>Bacillus</taxon>
    </lineage>
</organism>
<accession>P39845</accession>
<comment type="function">
    <text evidence="2">This protein is a multifunctional enzyme, able to activate and polymerize the amino acids Glu and Orn as part of the biosynthesis of the lipopeptide antibiotic lipastatin. The Orn residue is further epimerized to the D-isomer form. The activation sites for these amino acids consist of individual domains.</text>
</comment>
<comment type="cofactor">
    <cofactor evidence="3">
        <name>pantetheine 4'-phosphate</name>
        <dbReference type="ChEBI" id="CHEBI:47942"/>
    </cofactor>
    <text evidence="3">Binds 2 phosphopantetheines covalently.</text>
</comment>
<comment type="similarity">
    <text evidence="3">Belongs to the ATP-dependent AMP-binding enzyme family.</text>
</comment>
<sequence>MSEHTYSLTHAQRRVWFTELLEPDTSICNLTACVKFKGNIELDTLEGALNHSISRNDAIRFQLLEGEELEPRLHLTEYKYYPLRIIDFSNVEMIEIEQWIQDQASIPFKLFNSPLFQFYLLRIDSHEVWLFAKFHHIIMDGISLNVMGNQIIDLYQKMKKKDPLPDQPEPSYLSYIEKESQYLQSPRFAKDRLFWTQTFEHPLEYHSLADQTSLQKQSTSASRDTIILSPDLEQTIRIFCEEHKINIISLFMASFYICISRITSKKDLAIGTYYGNRGSKAEKEMLGMFVSSLPIRITVDPDTDFLSFVRTIGREQLSVMRHQRFPYNLLVNELRNEQKDLHNLIGISMQYQPLQWHNADDFDYETALYFSGYTANELSVQIQERIDNGTIQLNFDYQNTLFSLEDIKRIQSHLLTILENALKHPHSFIRELDMTNTREKQKLLYEFNKTEAVSPKAFTLHGLFERQAAFTPERLAIRFSGGSLTYAELDMYASRLAAHLAARGVTNESIVGVLSERSPDMLIAVLAVLKAGGAYLPLDPAYPKERLSYMLKDSGASLLLTQPGCSAPNFSGETLEVDMTSLASEKAENHEFTPADGGSLAYVIYTSGSTGQPKGVAVEHRQAVSFLTGMQHQFPLSEDDIVMVKTSFSFDASVWQLFWWSLSGASAYLLPPGWEKDSALIVQAIHQENVTTAHFIPAMLNSFLDQAEIERLSDRTSLKRVFAGGEPLAPRTAARFASVLPQVSLIHGYGPTEATVDAAFYVLDPERDRDRLRIPIGKPVPGARLYVLDPHLAVQPSGVAGELYIAGAGVARGYLNRPALTEERFLEDPFYPGERMYKTGDVARWLPDGNVEFLGRTDDQVKIRGYRIEPGEIEAALRSIEGVREAAVTVRTDSGEPELCAYVEGLQRNEVRAQLERLLPGYMVPAYMIEMEQWPVTPSGKLDRNALPAPGGAADAETYTAPRNVTEMKLSQLWEDVLKNGPVGIHDNFFDRGGHSLKATALVSRIAKEFDVQVPLKDVFAHPTVEGLATVIREGTDSPYEAIKPAEKQETYPVSSAQKRIYVLQQLEDGGTGYNMPAVLELEGKLNPERMERAFKELIKRHESLRTSFEQDAGGDPVQRIHDEVPFTLQTTVLGERTEQEAAAAFIKPFDLSQAPLFRAQIVKISDERHLLLVDMHHIISDGVSVNILIREFGELYNNRNLPALRIQYKDYAVWREGFKTGDAYKTQEAYWLKQLEGELPVLDLPADHARPPVRSFAGDKVSFTLDQEVASGLHKLARENGSTLYMVLLAAYTAFLSRLSGQEDIIVGSPIAGRPHKDLEPILGMFVNTLALRTRPEGGKPFVQYLQEVRETALEAFEHQDYPFEELVDKLELTRDMSRNPVFDAMFILQNVEKQDIDLREIKVRPANFAHHISLFDITLIATEISGSICCEMEFSTEVFLKATIERWADHFIEFLHEALSTPETSLAQINILSDKEKQKIVFEFNKTQVEFAQKDIPFHRIFEAKAEENPEHIAVIDNETEISYRLLNERANRLARTLQNRKGPKPTVAVLAKRSIDAIVGVLAVMKAGGVYIPIDAHYPKARIEYILRDSGADILLLQRELKHLISNSPESEMSHIFLDDEGSFEESNCNLNLSPAPEEPVYIIYTSGTTGAPKGVIVTYQNFTHAALAWRQIYELDRKPVRLLQIASFSFDVFSGDLARTLTNGGTLIVCPDETRLEPAEIYKIIKSQRITVMESTPALIIPVMEYVYRNQFKLPDLDILILGSDMVKAQDFKTLTDRFGQSMRIINSYGVTEATIDSSFYETSMGGECTGDNVPIGSPLPNVHMYVLSQTDQIQPIGVAGELCIGGAGVAKGYHHKPDLTQMKFTENPFVSGERLYRTGDRACWLPNGTIRLLGRMDYQVKINGYRIETEEIESVLLQTGLVREAAVAVQHDKNGQAGLAAYIVPSDVNTNALRAALTKELPAYMIPAYLIPLVNMPLTLNGKLDRNALPAPNNVLSRPYTAPVNDLQKTMAYIWEDVLSMSRVGIHDSFFELGGDSIKALQVAARLAAEGWSMTIRDLFRYSTIQELCGHITPLASQADQGPAEGEAELTPIQRRFFGQVHAFHYHYNQSVMLFSEKGFNANALHLALRKITEHHDAIRMIFQRDQNGHVIQFNRGINHKDHELFGLYISDWTKASLERAHLDEKLAAEETVIQSKMNVEKGPLLQAGLFKTAEGDHLLIALHHLVIDGVSWRILLEDLAAAYQQALEKKEIQLPPKTDSYLSYADGLTQIAESKQLLSEKTYWQTILDAHTAFLPKDIENVPDKLQMNSDAAAFVLSGDWTEKLLFETQQAYGTDANELLLTALGMALSEWTGHDQIVISTEGHGREGHVPNIDISRTVGWFTSIYPILLDMGIPEPFEDQLAYRIKTTKDMLRRVPNKGTGYGLLTHIGELRHKEPEVSFNYLGQFSEEKEVETFQLSYYQPRYEIAGEREREYELDINALITDGRLHVKAVYTQVFSKHSIECFMDRFHRHLIETIEHCSQKKAREKTLSDFSNKELTLSALSSIEDLVKDL</sequence>
<dbReference type="EC" id="2.3.1.-"/>
<dbReference type="EMBL" id="Z34883">
    <property type="protein sequence ID" value="CAA84360.1"/>
    <property type="molecule type" value="Genomic_DNA"/>
</dbReference>
<dbReference type="EMBL" id="AL009126">
    <property type="protein sequence ID" value="CAB13717.2"/>
    <property type="molecule type" value="Genomic_DNA"/>
</dbReference>
<dbReference type="PIR" id="I40456">
    <property type="entry name" value="I40456"/>
</dbReference>
<dbReference type="RefSeq" id="NP_389716.2">
    <property type="nucleotide sequence ID" value="NC_000964.3"/>
</dbReference>
<dbReference type="RefSeq" id="WP_010886523.1">
    <property type="nucleotide sequence ID" value="NZ_OZ025638.1"/>
</dbReference>
<dbReference type="SMR" id="P39845"/>
<dbReference type="FunCoup" id="P39845">
    <property type="interactions" value="33"/>
</dbReference>
<dbReference type="STRING" id="224308.BSU18340"/>
<dbReference type="PaxDb" id="224308-BSU18340"/>
<dbReference type="EnsemblBacteria" id="CAB13717">
    <property type="protein sequence ID" value="CAB13717"/>
    <property type="gene ID" value="BSU_18340"/>
</dbReference>
<dbReference type="GeneID" id="939983"/>
<dbReference type="KEGG" id="bsu:BSU18340"/>
<dbReference type="PATRIC" id="fig|224308.179.peg.2001"/>
<dbReference type="eggNOG" id="COG1020">
    <property type="taxonomic scope" value="Bacteria"/>
</dbReference>
<dbReference type="InParanoid" id="P39845"/>
<dbReference type="OrthoDB" id="9765680at2"/>
<dbReference type="BioCyc" id="BSUB:BSU18340-MONOMER"/>
<dbReference type="Proteomes" id="UP000001570">
    <property type="component" value="Chromosome"/>
</dbReference>
<dbReference type="GO" id="GO:0005737">
    <property type="term" value="C:cytoplasm"/>
    <property type="evidence" value="ECO:0000318"/>
    <property type="project" value="GO_Central"/>
</dbReference>
<dbReference type="GO" id="GO:0005829">
    <property type="term" value="C:cytosol"/>
    <property type="evidence" value="ECO:0000318"/>
    <property type="project" value="GO_Central"/>
</dbReference>
<dbReference type="GO" id="GO:0016874">
    <property type="term" value="F:ligase activity"/>
    <property type="evidence" value="ECO:0007669"/>
    <property type="project" value="UniProtKB-KW"/>
</dbReference>
<dbReference type="GO" id="GO:0031177">
    <property type="term" value="F:phosphopantetheine binding"/>
    <property type="evidence" value="ECO:0000318"/>
    <property type="project" value="GO_Central"/>
</dbReference>
<dbReference type="GO" id="GO:0016740">
    <property type="term" value="F:transferase activity"/>
    <property type="evidence" value="ECO:0007669"/>
    <property type="project" value="UniProtKB-KW"/>
</dbReference>
<dbReference type="GO" id="GO:0043041">
    <property type="term" value="P:amino acid activation for nonribosomal peptide biosynthetic process"/>
    <property type="evidence" value="ECO:0000318"/>
    <property type="project" value="GO_Central"/>
</dbReference>
<dbReference type="GO" id="GO:0017000">
    <property type="term" value="P:antibiotic biosynthetic process"/>
    <property type="evidence" value="ECO:0007669"/>
    <property type="project" value="UniProtKB-KW"/>
</dbReference>
<dbReference type="GO" id="GO:0008610">
    <property type="term" value="P:lipid biosynthetic process"/>
    <property type="evidence" value="ECO:0007669"/>
    <property type="project" value="UniProtKB-ARBA"/>
</dbReference>
<dbReference type="GO" id="GO:0044550">
    <property type="term" value="P:secondary metabolite biosynthetic process"/>
    <property type="evidence" value="ECO:0000318"/>
    <property type="project" value="GO_Central"/>
</dbReference>
<dbReference type="CDD" id="cd05930">
    <property type="entry name" value="A_NRPS"/>
    <property type="match status" value="1"/>
</dbReference>
<dbReference type="CDD" id="cd17650">
    <property type="entry name" value="A_NRPS_PpsD_like"/>
    <property type="match status" value="1"/>
</dbReference>
<dbReference type="CDD" id="cd19534">
    <property type="entry name" value="E_NRPS"/>
    <property type="match status" value="1"/>
</dbReference>
<dbReference type="CDD" id="cd19531">
    <property type="entry name" value="LCL_NRPS-like"/>
    <property type="match status" value="1"/>
</dbReference>
<dbReference type="CDD" id="cd19533">
    <property type="entry name" value="starter-C_NRPS"/>
    <property type="match status" value="1"/>
</dbReference>
<dbReference type="FunFam" id="3.30.300.30:FF:000010">
    <property type="entry name" value="Enterobactin synthetase component F"/>
    <property type="match status" value="2"/>
</dbReference>
<dbReference type="FunFam" id="3.40.50.980:FF:000002">
    <property type="entry name" value="Enterobactin synthetase component F"/>
    <property type="match status" value="1"/>
</dbReference>
<dbReference type="FunFam" id="3.30.559.10:FF:000012">
    <property type="entry name" value="Non-ribosomal peptide synthetase"/>
    <property type="match status" value="1"/>
</dbReference>
<dbReference type="FunFam" id="3.30.559.30:FF:000001">
    <property type="entry name" value="Non-ribosomal peptide synthetase"/>
    <property type="match status" value="1"/>
</dbReference>
<dbReference type="FunFam" id="3.40.50.12780:FF:000012">
    <property type="entry name" value="Non-ribosomal peptide synthetase"/>
    <property type="match status" value="1"/>
</dbReference>
<dbReference type="FunFam" id="3.40.50.980:FF:000001">
    <property type="entry name" value="Non-ribosomal peptide synthetase"/>
    <property type="match status" value="2"/>
</dbReference>
<dbReference type="FunFam" id="2.30.38.10:FF:000001">
    <property type="entry name" value="Non-ribosomal peptide synthetase PvdI"/>
    <property type="match status" value="2"/>
</dbReference>
<dbReference type="FunFam" id="3.30.559.10:FF:000016">
    <property type="entry name" value="Nonribosomal peptide synthase Pes1"/>
    <property type="match status" value="1"/>
</dbReference>
<dbReference type="FunFam" id="1.10.1200.10:FF:000005">
    <property type="entry name" value="Nonribosomal peptide synthetase 1"/>
    <property type="match status" value="2"/>
</dbReference>
<dbReference type="FunFam" id="3.40.50.1820:FF:000818">
    <property type="entry name" value="Plipastatin synthase subunit C"/>
    <property type="match status" value="1"/>
</dbReference>
<dbReference type="Gene3D" id="3.30.300.30">
    <property type="match status" value="2"/>
</dbReference>
<dbReference type="Gene3D" id="3.40.50.980">
    <property type="match status" value="4"/>
</dbReference>
<dbReference type="Gene3D" id="1.10.1200.10">
    <property type="entry name" value="ACP-like"/>
    <property type="match status" value="2"/>
</dbReference>
<dbReference type="Gene3D" id="3.30.559.10">
    <property type="entry name" value="Chloramphenicol acetyltransferase-like domain"/>
    <property type="match status" value="3"/>
</dbReference>
<dbReference type="Gene3D" id="2.30.38.10">
    <property type="entry name" value="Luciferase, Domain 3"/>
    <property type="match status" value="2"/>
</dbReference>
<dbReference type="Gene3D" id="3.30.559.30">
    <property type="entry name" value="Nonribosomal peptide synthetase, condensation domain"/>
    <property type="match status" value="3"/>
</dbReference>
<dbReference type="InterPro" id="IPR010071">
    <property type="entry name" value="AA_adenyl_dom"/>
</dbReference>
<dbReference type="InterPro" id="IPR036736">
    <property type="entry name" value="ACP-like_sf"/>
</dbReference>
<dbReference type="InterPro" id="IPR025110">
    <property type="entry name" value="AMP-bd_C"/>
</dbReference>
<dbReference type="InterPro" id="IPR045851">
    <property type="entry name" value="AMP-bd_C_sf"/>
</dbReference>
<dbReference type="InterPro" id="IPR020845">
    <property type="entry name" value="AMP-binding_CS"/>
</dbReference>
<dbReference type="InterPro" id="IPR000873">
    <property type="entry name" value="AMP-dep_synth/lig_dom"/>
</dbReference>
<dbReference type="InterPro" id="IPR023213">
    <property type="entry name" value="CAT-like_dom_sf"/>
</dbReference>
<dbReference type="InterPro" id="IPR001242">
    <property type="entry name" value="Condensatn"/>
</dbReference>
<dbReference type="InterPro" id="IPR010060">
    <property type="entry name" value="NRPS_synth"/>
</dbReference>
<dbReference type="InterPro" id="IPR020806">
    <property type="entry name" value="PKS_PP-bd"/>
</dbReference>
<dbReference type="InterPro" id="IPR009081">
    <property type="entry name" value="PP-bd_ACP"/>
</dbReference>
<dbReference type="InterPro" id="IPR006162">
    <property type="entry name" value="Ppantetheine_attach_site"/>
</dbReference>
<dbReference type="NCBIfam" id="TIGR01733">
    <property type="entry name" value="AA-adenyl-dom"/>
    <property type="match status" value="2"/>
</dbReference>
<dbReference type="NCBIfam" id="TIGR01720">
    <property type="entry name" value="NRPS-para261"/>
    <property type="match status" value="1"/>
</dbReference>
<dbReference type="NCBIfam" id="NF003417">
    <property type="entry name" value="PRK04813.1"/>
    <property type="match status" value="2"/>
</dbReference>
<dbReference type="PANTHER" id="PTHR45527:SF1">
    <property type="entry name" value="FATTY ACID SYNTHASE"/>
    <property type="match status" value="1"/>
</dbReference>
<dbReference type="PANTHER" id="PTHR45527">
    <property type="entry name" value="NONRIBOSOMAL PEPTIDE SYNTHETASE"/>
    <property type="match status" value="1"/>
</dbReference>
<dbReference type="Pfam" id="PF00501">
    <property type="entry name" value="AMP-binding"/>
    <property type="match status" value="2"/>
</dbReference>
<dbReference type="Pfam" id="PF13193">
    <property type="entry name" value="AMP-binding_C"/>
    <property type="match status" value="2"/>
</dbReference>
<dbReference type="Pfam" id="PF00668">
    <property type="entry name" value="Condensation"/>
    <property type="match status" value="3"/>
</dbReference>
<dbReference type="Pfam" id="PF00550">
    <property type="entry name" value="PP-binding"/>
    <property type="match status" value="2"/>
</dbReference>
<dbReference type="SMART" id="SM00823">
    <property type="entry name" value="PKS_PP"/>
    <property type="match status" value="2"/>
</dbReference>
<dbReference type="SUPFAM" id="SSF56801">
    <property type="entry name" value="Acetyl-CoA synthetase-like"/>
    <property type="match status" value="2"/>
</dbReference>
<dbReference type="SUPFAM" id="SSF47336">
    <property type="entry name" value="ACP-like"/>
    <property type="match status" value="2"/>
</dbReference>
<dbReference type="SUPFAM" id="SSF52777">
    <property type="entry name" value="CoA-dependent acyltransferases"/>
    <property type="match status" value="6"/>
</dbReference>
<dbReference type="PROSITE" id="PS00455">
    <property type="entry name" value="AMP_BINDING"/>
    <property type="match status" value="2"/>
</dbReference>
<dbReference type="PROSITE" id="PS50075">
    <property type="entry name" value="CARRIER"/>
    <property type="match status" value="2"/>
</dbReference>
<dbReference type="PROSITE" id="PS00012">
    <property type="entry name" value="PHOSPHOPANTETHEINE"/>
    <property type="match status" value="1"/>
</dbReference>
<evidence type="ECO:0000255" key="1">
    <source>
        <dbReference type="PROSITE-ProRule" id="PRU00258"/>
    </source>
</evidence>
<evidence type="ECO:0000269" key="2">
    <source>
    </source>
</evidence>
<evidence type="ECO:0000305" key="3"/>
<proteinExistence type="evidence at protein level"/>
<feature type="chain" id="PRO_0000193185" description="Plipastatin synthase subunit A">
    <location>
        <begin position="1"/>
        <end position="2561"/>
    </location>
</feature>
<feature type="domain" description="Carrier 1" evidence="1">
    <location>
        <begin position="961"/>
        <end position="1036"/>
    </location>
</feature>
<feature type="domain" description="Carrier 2" evidence="1">
    <location>
        <begin position="2007"/>
        <end position="2081"/>
    </location>
</feature>
<feature type="region of interest" description="Domain 1 (glutamate-activating)">
    <location>
        <begin position="1"/>
        <end position="1038"/>
    </location>
</feature>
<feature type="region of interest" description="Condensation 1">
    <location>
        <begin position="2"/>
        <end position="300"/>
    </location>
</feature>
<feature type="region of interest" description="Adenylation 1">
    <location>
        <begin position="485"/>
        <end position="888"/>
    </location>
</feature>
<feature type="region of interest" description="Domain 2 (D-ornithine-activating)">
    <location>
        <begin position="1048"/>
        <end position="2554"/>
    </location>
</feature>
<feature type="region of interest" description="Condensation 2">
    <location>
        <begin position="1048"/>
        <end position="1338"/>
    </location>
</feature>
<feature type="region of interest" description="Adenylation 2">
    <location>
        <begin position="1525"/>
        <end position="1932"/>
    </location>
</feature>
<feature type="region of interest" description="Epimerization">
    <location>
        <begin position="2089"/>
        <end position="2554"/>
    </location>
</feature>
<feature type="modified residue" description="O-(pantetheine 4'-phosphoryl)serine" evidence="1">
    <location>
        <position position="996"/>
    </location>
</feature>
<feature type="modified residue" description="O-(pantetheine 4'-phosphoryl)serine" evidence="1">
    <location>
        <position position="2042"/>
    </location>
</feature>
<feature type="sequence conflict" description="In Ref. 1; CAA84360." evidence="3" ref="1">
    <original>E</original>
    <variation>Q</variation>
    <location>
        <position position="916"/>
    </location>
</feature>
<gene>
    <name type="primary">ppsA</name>
    <name type="synonym">pps1</name>
    <name type="ordered locus">BSU18340</name>
</gene>
<reference key="1">
    <citation type="journal article" date="1995" name="Microbiology">
        <title>A putative new peptide synthase operon in Bacillus subtilis: partial characterization.</title>
        <authorList>
            <person name="Tognoni A."/>
            <person name="Franchi E."/>
            <person name="Magistrelli C."/>
            <person name="Colombo E."/>
            <person name="Cosmina P."/>
            <person name="Grandi G."/>
        </authorList>
    </citation>
    <scope>NUCLEOTIDE SEQUENCE [GENOMIC DNA]</scope>
    <source>
        <strain>168</strain>
    </source>
</reference>
<reference key="2">
    <citation type="journal article" date="1997" name="Nature">
        <title>The complete genome sequence of the Gram-positive bacterium Bacillus subtilis.</title>
        <authorList>
            <person name="Kunst F."/>
            <person name="Ogasawara N."/>
            <person name="Moszer I."/>
            <person name="Albertini A.M."/>
            <person name="Alloni G."/>
            <person name="Azevedo V."/>
            <person name="Bertero M.G."/>
            <person name="Bessieres P."/>
            <person name="Bolotin A."/>
            <person name="Borchert S."/>
            <person name="Borriss R."/>
            <person name="Boursier L."/>
            <person name="Brans A."/>
            <person name="Braun M."/>
            <person name="Brignell S.C."/>
            <person name="Bron S."/>
            <person name="Brouillet S."/>
            <person name="Bruschi C.V."/>
            <person name="Caldwell B."/>
            <person name="Capuano V."/>
            <person name="Carter N.M."/>
            <person name="Choi S.-K."/>
            <person name="Codani J.-J."/>
            <person name="Connerton I.F."/>
            <person name="Cummings N.J."/>
            <person name="Daniel R.A."/>
            <person name="Denizot F."/>
            <person name="Devine K.M."/>
            <person name="Duesterhoeft A."/>
            <person name="Ehrlich S.D."/>
            <person name="Emmerson P.T."/>
            <person name="Entian K.-D."/>
            <person name="Errington J."/>
            <person name="Fabret C."/>
            <person name="Ferrari E."/>
            <person name="Foulger D."/>
            <person name="Fritz C."/>
            <person name="Fujita M."/>
            <person name="Fujita Y."/>
            <person name="Fuma S."/>
            <person name="Galizzi A."/>
            <person name="Galleron N."/>
            <person name="Ghim S.-Y."/>
            <person name="Glaser P."/>
            <person name="Goffeau A."/>
            <person name="Golightly E.J."/>
            <person name="Grandi G."/>
            <person name="Guiseppi G."/>
            <person name="Guy B.J."/>
            <person name="Haga K."/>
            <person name="Haiech J."/>
            <person name="Harwood C.R."/>
            <person name="Henaut A."/>
            <person name="Hilbert H."/>
            <person name="Holsappel S."/>
            <person name="Hosono S."/>
            <person name="Hullo M.-F."/>
            <person name="Itaya M."/>
            <person name="Jones L.-M."/>
            <person name="Joris B."/>
            <person name="Karamata D."/>
            <person name="Kasahara Y."/>
            <person name="Klaerr-Blanchard M."/>
            <person name="Klein C."/>
            <person name="Kobayashi Y."/>
            <person name="Koetter P."/>
            <person name="Koningstein G."/>
            <person name="Krogh S."/>
            <person name="Kumano M."/>
            <person name="Kurita K."/>
            <person name="Lapidus A."/>
            <person name="Lardinois S."/>
            <person name="Lauber J."/>
            <person name="Lazarevic V."/>
            <person name="Lee S.-M."/>
            <person name="Levine A."/>
            <person name="Liu H."/>
            <person name="Masuda S."/>
            <person name="Mauel C."/>
            <person name="Medigue C."/>
            <person name="Medina N."/>
            <person name="Mellado R.P."/>
            <person name="Mizuno M."/>
            <person name="Moestl D."/>
            <person name="Nakai S."/>
            <person name="Noback M."/>
            <person name="Noone D."/>
            <person name="O'Reilly M."/>
            <person name="Ogawa K."/>
            <person name="Ogiwara A."/>
            <person name="Oudega B."/>
            <person name="Park S.-H."/>
            <person name="Parro V."/>
            <person name="Pohl T.M."/>
            <person name="Portetelle D."/>
            <person name="Porwollik S."/>
            <person name="Prescott A.M."/>
            <person name="Presecan E."/>
            <person name="Pujic P."/>
            <person name="Purnelle B."/>
            <person name="Rapoport G."/>
            <person name="Rey M."/>
            <person name="Reynolds S."/>
            <person name="Rieger M."/>
            <person name="Rivolta C."/>
            <person name="Rocha E."/>
            <person name="Roche B."/>
            <person name="Rose M."/>
            <person name="Sadaie Y."/>
            <person name="Sato T."/>
            <person name="Scanlan E."/>
            <person name="Schleich S."/>
            <person name="Schroeter R."/>
            <person name="Scoffone F."/>
            <person name="Sekiguchi J."/>
            <person name="Sekowska A."/>
            <person name="Seror S.J."/>
            <person name="Serror P."/>
            <person name="Shin B.-S."/>
            <person name="Soldo B."/>
            <person name="Sorokin A."/>
            <person name="Tacconi E."/>
            <person name="Takagi T."/>
            <person name="Takahashi H."/>
            <person name="Takemaru K."/>
            <person name="Takeuchi M."/>
            <person name="Tamakoshi A."/>
            <person name="Tanaka T."/>
            <person name="Terpstra P."/>
            <person name="Tognoni A."/>
            <person name="Tosato V."/>
            <person name="Uchiyama S."/>
            <person name="Vandenbol M."/>
            <person name="Vannier F."/>
            <person name="Vassarotti A."/>
            <person name="Viari A."/>
            <person name="Wambutt R."/>
            <person name="Wedler E."/>
            <person name="Wedler H."/>
            <person name="Weitzenegger T."/>
            <person name="Winters P."/>
            <person name="Wipat A."/>
            <person name="Yamamoto H."/>
            <person name="Yamane K."/>
            <person name="Yasumoto K."/>
            <person name="Yata K."/>
            <person name="Yoshida K."/>
            <person name="Yoshikawa H.-F."/>
            <person name="Zumstein E."/>
            <person name="Yoshikawa H."/>
            <person name="Danchin A."/>
        </authorList>
    </citation>
    <scope>NUCLEOTIDE SEQUENCE [LARGE SCALE GENOMIC DNA]</scope>
    <source>
        <strain>168</strain>
    </source>
</reference>
<reference key="3">
    <citation type="journal article" date="2009" name="Microbiology">
        <title>From a consortium sequence to a unified sequence: the Bacillus subtilis 168 reference genome a decade later.</title>
        <authorList>
            <person name="Barbe V."/>
            <person name="Cruveiller S."/>
            <person name="Kunst F."/>
            <person name="Lenoble P."/>
            <person name="Meurice G."/>
            <person name="Sekowska A."/>
            <person name="Vallenet D."/>
            <person name="Wang T."/>
            <person name="Moszer I."/>
            <person name="Medigue C."/>
            <person name="Danchin A."/>
        </authorList>
    </citation>
    <scope>SEQUENCE REVISION TO 916</scope>
</reference>
<reference key="4">
    <citation type="journal article" date="1999" name="Antimicrob. Agents Chemother.">
        <title>The genes degQ, pps, and lpa-8 (sfp) are responsible for conversion of Bacillus subtilis 168 to plipastatin production.</title>
        <authorList>
            <person name="Tsuge K."/>
            <person name="Ano T."/>
            <person name="Hirai M."/>
            <person name="Nakamura Y."/>
            <person name="Shoda M."/>
        </authorList>
    </citation>
    <scope>FUNCTION IN PLIPASTATIN BIOSYNTHESIS</scope>
</reference>